<accession>P84763</accession>
<dbReference type="TCDB" id="1.C.94.1.1">
    <property type="family name" value="the thuricin (thuricin) family"/>
</dbReference>
<dbReference type="GO" id="GO:0042742">
    <property type="term" value="P:defense response to bacterium"/>
    <property type="evidence" value="ECO:0007669"/>
    <property type="project" value="UniProtKB-KW"/>
</dbReference>
<dbReference type="GO" id="GO:0031640">
    <property type="term" value="P:killing of cells of another organism"/>
    <property type="evidence" value="ECO:0007669"/>
    <property type="project" value="UniProtKB-KW"/>
</dbReference>
<evidence type="ECO:0000269" key="1">
    <source>
    </source>
</evidence>
<evidence type="ECO:0000303" key="2">
    <source>
    </source>
</evidence>
<proteinExistence type="evidence at protein level"/>
<reference key="1">
    <citation type="journal article" date="2007" name="Can. J. Microbiol.">
        <title>Purification and partial amino acid sequence of thuricin S, a new anti-Listeria bacteriocin from Bacillus thuringiensis.</title>
        <authorList>
            <person name="Chehimi S."/>
            <person name="Delalande F."/>
            <person name="Sable S."/>
            <person name="Hajlaoui M.R."/>
            <person name="van Dorsselaer A."/>
            <person name="Limam F."/>
            <person name="Pons A.M."/>
        </authorList>
    </citation>
    <scope>PROTEIN SEQUENCE</scope>
    <scope>FUNCTION</scope>
    <scope>MASS SPECTROMETRY</scope>
    <source>
        <strain>HD198</strain>
    </source>
</reference>
<protein>
    <recommendedName>
        <fullName>Bacteriocin thuricin-S</fullName>
    </recommendedName>
</protein>
<organism>
    <name type="scientific">Bacillus thuringiensis subsp. entomocidus</name>
    <dbReference type="NCBI Taxonomy" id="1436"/>
    <lineage>
        <taxon>Bacteria</taxon>
        <taxon>Bacillati</taxon>
        <taxon>Bacillota</taxon>
        <taxon>Bacilli</taxon>
        <taxon>Bacillales</taxon>
        <taxon>Bacillaceae</taxon>
        <taxon>Bacillus</taxon>
        <taxon>Bacillus cereus group</taxon>
    </lineage>
</organism>
<sequence length="18" mass="2027">DWTXWSXLVXAACSVELL</sequence>
<comment type="function">
    <text evidence="1">Bacteriocin, active against the Gram-positive bacteria L.monocytogenes, B.subtilis and other Bacillus, E.cloacae, L.acidophilus, L.lactis, P.acidilactici, S.thermophilus, and several Gram-negative bacteria including S.cholerae, S.flexneri and P.aeruginosa.</text>
</comment>
<comment type="mass spectrometry" mass="3137.03" method="MALDI" evidence="1"/>
<keyword id="KW-0044">Antibiotic</keyword>
<keyword id="KW-0929">Antimicrobial</keyword>
<keyword id="KW-0078">Bacteriocin</keyword>
<keyword id="KW-0903">Direct protein sequencing</keyword>
<name>THURS_BACTE</name>
<feature type="peptide" id="PRO_0000223492" description="Bacteriocin thuricin-S">
    <location>
        <begin position="1"/>
        <end position="18" status="greater than"/>
    </location>
</feature>
<feature type="non-terminal residue" evidence="2">
    <location>
        <position position="18"/>
    </location>
</feature>